<reference key="1">
    <citation type="submission" date="2004-11" db="EMBL/GenBank/DDBJ databases">
        <authorList>
            <consortium name="The German cDNA consortium"/>
        </authorList>
    </citation>
    <scope>NUCLEOTIDE SEQUENCE [LARGE SCALE MRNA]</scope>
    <source>
        <tissue>Kidney</tissue>
    </source>
</reference>
<name>SHCAF_PONAB</name>
<proteinExistence type="evidence at transcript level"/>
<protein>
    <recommendedName>
        <fullName>SIN3-HDAC complex-associated factor</fullName>
    </recommendedName>
    <alternativeName>
        <fullName>Protein FAM60A</fullName>
    </alternativeName>
    <alternativeName>
        <fullName>Tera protein homolog</fullName>
    </alternativeName>
</protein>
<gene>
    <name type="primary">SINHCAF</name>
    <name type="synonym">FAM60A</name>
</gene>
<evidence type="ECO:0000250" key="1">
    <source>
        <dbReference type="UniProtKB" id="Q8C8M1"/>
    </source>
</evidence>
<evidence type="ECO:0000250" key="2">
    <source>
        <dbReference type="UniProtKB" id="Q9NP50"/>
    </source>
</evidence>
<evidence type="ECO:0000256" key="3">
    <source>
        <dbReference type="SAM" id="MobiDB-lite"/>
    </source>
</evidence>
<evidence type="ECO:0000305" key="4"/>
<keyword id="KW-0539">Nucleus</keyword>
<keyword id="KW-1185">Reference proteome</keyword>
<organism>
    <name type="scientific">Pongo abelii</name>
    <name type="common">Sumatran orangutan</name>
    <name type="synonym">Pongo pygmaeus abelii</name>
    <dbReference type="NCBI Taxonomy" id="9601"/>
    <lineage>
        <taxon>Eukaryota</taxon>
        <taxon>Metazoa</taxon>
        <taxon>Chordata</taxon>
        <taxon>Craniata</taxon>
        <taxon>Vertebrata</taxon>
        <taxon>Euteleostomi</taxon>
        <taxon>Mammalia</taxon>
        <taxon>Eutheria</taxon>
        <taxon>Euarchontoglires</taxon>
        <taxon>Primates</taxon>
        <taxon>Haplorrhini</taxon>
        <taxon>Catarrhini</taxon>
        <taxon>Hominidae</taxon>
        <taxon>Pongo</taxon>
    </lineage>
</organism>
<comment type="function">
    <text evidence="1 2">Subunit of the Sin3 deacetylase complex (Sin3/HDAC), this subunit is important for the repression of genes encoding components of the TGF-beta signaling pathway. Core component of a SIN3A complex (composed of at least SINHCAF, SIN3A, HDAC1, SAP30, RBBP4, OGT and TET1) present in embryonic stem (ES) cells. Promotes the stability of SIN3A and its presence on chromatin and is crucial for maintaining the potential of ES cells to proliferate rapidly, while ensuring a short G1-phase of the cell cycle, thereby preventing premature lineage priming.</text>
</comment>
<comment type="subunit">
    <text evidence="1 2">Component of the Sin3/HDAC corepressor complex at least composed of BRMS1, BRMS1L, ING2, SAP30, SAP30L, HDAC1. Found in a complex composed of at least SINHCAF, SIN3A, HDAC1, SAP30, RBBP4, OGT and TET1. Interacts with SIN3A and OGT.</text>
</comment>
<comment type="subcellular location">
    <subcellularLocation>
        <location evidence="1">Nucleus</location>
    </subcellularLocation>
</comment>
<comment type="similarity">
    <text evidence="4">Belongs to the SINHCAF family.</text>
</comment>
<dbReference type="EMBL" id="CR858359">
    <property type="protein sequence ID" value="CAH90590.1"/>
    <property type="molecule type" value="mRNA"/>
</dbReference>
<dbReference type="RefSeq" id="NP_001125318.1">
    <property type="nucleotide sequence ID" value="NM_001131846.1"/>
</dbReference>
<dbReference type="STRING" id="9601.ENSPPYP00000005017"/>
<dbReference type="GeneID" id="100172217"/>
<dbReference type="KEGG" id="pon:100172217"/>
<dbReference type="CTD" id="58516"/>
<dbReference type="eggNOG" id="ENOG502QSAG">
    <property type="taxonomic scope" value="Eukaryota"/>
</dbReference>
<dbReference type="InParanoid" id="Q5RCB7"/>
<dbReference type="OrthoDB" id="10023333at2759"/>
<dbReference type="Proteomes" id="UP000001595">
    <property type="component" value="Unplaced"/>
</dbReference>
<dbReference type="GO" id="GO:0070822">
    <property type="term" value="C:Sin3-type complex"/>
    <property type="evidence" value="ECO:0000250"/>
    <property type="project" value="UniProtKB"/>
</dbReference>
<dbReference type="GO" id="GO:0045596">
    <property type="term" value="P:negative regulation of cell differentiation"/>
    <property type="evidence" value="ECO:0000250"/>
    <property type="project" value="UniProtKB"/>
</dbReference>
<dbReference type="GO" id="GO:0030336">
    <property type="term" value="P:negative regulation of cell migration"/>
    <property type="evidence" value="ECO:0000250"/>
    <property type="project" value="UniProtKB"/>
</dbReference>
<dbReference type="GO" id="GO:0008284">
    <property type="term" value="P:positive regulation of cell population proliferation"/>
    <property type="evidence" value="ECO:0000250"/>
    <property type="project" value="UniProtKB"/>
</dbReference>
<dbReference type="InterPro" id="IPR026065">
    <property type="entry name" value="FAM60A"/>
</dbReference>
<dbReference type="PANTHER" id="PTHR13422">
    <property type="entry name" value="SIN3-HDAC COMPLEX-ASSOCIATED FACTOR"/>
    <property type="match status" value="1"/>
</dbReference>
<dbReference type="PANTHER" id="PTHR13422:SF12">
    <property type="entry name" value="SIN3-HDAC COMPLEX-ASSOCIATED FACTOR"/>
    <property type="match status" value="1"/>
</dbReference>
<dbReference type="Pfam" id="PF15396">
    <property type="entry name" value="FAM60A"/>
    <property type="match status" value="1"/>
</dbReference>
<feature type="chain" id="PRO_0000187088" description="SIN3-HDAC complex-associated factor">
    <location>
        <begin position="1"/>
        <end position="221"/>
    </location>
</feature>
<feature type="region of interest" description="Disordered" evidence="3">
    <location>
        <begin position="112"/>
        <end position="152"/>
    </location>
</feature>
<feature type="region of interest" description="Disordered" evidence="3">
    <location>
        <begin position="201"/>
        <end position="221"/>
    </location>
</feature>
<feature type="compositionally biased region" description="Basic and acidic residues" evidence="3">
    <location>
        <begin position="112"/>
        <end position="121"/>
    </location>
</feature>
<feature type="compositionally biased region" description="Low complexity" evidence="3">
    <location>
        <begin position="124"/>
        <end position="135"/>
    </location>
</feature>
<feature type="compositionally biased region" description="Polar residues" evidence="3">
    <location>
        <begin position="136"/>
        <end position="152"/>
    </location>
</feature>
<accession>Q5RCB7</accession>
<sequence>MFGFHKPKMYRSIEGCCICRAKSSSSRFTDSKRYEKDFQSCFGLHETRSGDICNACVLLVKRWKKLPAGSKKNWNHVVDARAGPSLKTTLKPKKVKTLSGNRIKSNQISKLQKEFRRHNSDAHSTTSSASPAQSPCYSNQSDDGSDTEMASGSNRTPVFSFLDLTYWKRQKICCGIIYKGRFGEVLIDTHLFKPCCSNKKAAAEKPEEQGPEPLPISTQEW</sequence>